<name>URE1_BURTA</name>
<keyword id="KW-0963">Cytoplasm</keyword>
<keyword id="KW-0378">Hydrolase</keyword>
<keyword id="KW-0479">Metal-binding</keyword>
<keyword id="KW-0533">Nickel</keyword>
<sequence length="564" mass="60302">MSRRAYAEMYGPTTGDRIRLADTELLIEVERDYTIYGEEVKFGGGKVIRDGMGQSQLSAADVADTVITNAVILDHWGIVKADIAIKHGRIAAIGKAGNPDIQPGVTIAIGAATEIIAGEGLIVTAGGIDTHIHFISPQQIDEALASGVTTMIGGGTGPATGTNATTCTPGPWHMERMLQAADGWPINLGFLGKGNASRPQPLVEQIEAGAIGLKLHEDWGTTPAAIDNCLTVADDTDTQVAIHTDTLNEGGFVEATVAAFKGRTIHTYHTEGAGGGHAPDILKVCGEPNVLPSSTNPTRPYTINTLDEHLDMLMVCHHLDPSIAEDLAFAESRIRRETIAAEDILHDLGALSMLSSDSQAMGRVGEVIIRTWQSAHKMKMQRGALAEDSARNDNFRAKRYVAKYTINPALTHGIAHEVGSIEPGKWADLVLWEPAFFGVKPAMIIKGGMIAVAQMGDPNASIPTPQPVHYREMFATRGGALARTSLTFVSQLTLDAGIGARYGLAKRLVPVRGCRTVTKRDMIHNAWQPAISVDPETYDVVADGALLTCEPAAVLPMAQRYFLF</sequence>
<gene>
    <name evidence="1" type="primary">ureC</name>
    <name type="ordered locus">BTH_I1496</name>
</gene>
<comment type="catalytic activity">
    <reaction evidence="1">
        <text>urea + 2 H2O + H(+) = hydrogencarbonate + 2 NH4(+)</text>
        <dbReference type="Rhea" id="RHEA:20557"/>
        <dbReference type="ChEBI" id="CHEBI:15377"/>
        <dbReference type="ChEBI" id="CHEBI:15378"/>
        <dbReference type="ChEBI" id="CHEBI:16199"/>
        <dbReference type="ChEBI" id="CHEBI:17544"/>
        <dbReference type="ChEBI" id="CHEBI:28938"/>
        <dbReference type="EC" id="3.5.1.5"/>
    </reaction>
</comment>
<comment type="cofactor">
    <cofactor evidence="1">
        <name>Ni cation</name>
        <dbReference type="ChEBI" id="CHEBI:25516"/>
    </cofactor>
    <text evidence="1">Binds 2 nickel ions per subunit.</text>
</comment>
<comment type="pathway">
    <text evidence="1">Nitrogen metabolism; urea degradation; CO(2) and NH(3) from urea (urease route): step 1/1.</text>
</comment>
<comment type="subunit">
    <text evidence="1">Heterotrimer of UreA (gamma), UreB (beta) and UreC (alpha) subunits. Three heterotrimers associate to form the active enzyme.</text>
</comment>
<comment type="subcellular location">
    <subcellularLocation>
        <location evidence="1">Cytoplasm</location>
    </subcellularLocation>
</comment>
<comment type="PTM">
    <text evidence="1">Carboxylation allows a single lysine to coordinate two nickel ions.</text>
</comment>
<comment type="similarity">
    <text evidence="1">Belongs to the metallo-dependent hydrolases superfamily. Urease alpha subunit family.</text>
</comment>
<proteinExistence type="inferred from homology"/>
<accession>Q2SYF7</accession>
<organism>
    <name type="scientific">Burkholderia thailandensis (strain ATCC 700388 / DSM 13276 / CCUG 48851 / CIP 106301 / E264)</name>
    <dbReference type="NCBI Taxonomy" id="271848"/>
    <lineage>
        <taxon>Bacteria</taxon>
        <taxon>Pseudomonadati</taxon>
        <taxon>Pseudomonadota</taxon>
        <taxon>Betaproteobacteria</taxon>
        <taxon>Burkholderiales</taxon>
        <taxon>Burkholderiaceae</taxon>
        <taxon>Burkholderia</taxon>
        <taxon>pseudomallei group</taxon>
    </lineage>
</organism>
<evidence type="ECO:0000255" key="1">
    <source>
        <dbReference type="HAMAP-Rule" id="MF_01953"/>
    </source>
</evidence>
<feature type="chain" id="PRO_0000239874" description="Urease subunit alpha">
    <location>
        <begin position="1"/>
        <end position="564"/>
    </location>
</feature>
<feature type="domain" description="Urease" evidence="1">
    <location>
        <begin position="126"/>
        <end position="564"/>
    </location>
</feature>
<feature type="active site" description="Proton donor" evidence="1">
    <location>
        <position position="317"/>
    </location>
</feature>
<feature type="binding site" evidence="1">
    <location>
        <position position="131"/>
    </location>
    <ligand>
        <name>Ni(2+)</name>
        <dbReference type="ChEBI" id="CHEBI:49786"/>
        <label>1</label>
    </ligand>
</feature>
<feature type="binding site" evidence="1">
    <location>
        <position position="133"/>
    </location>
    <ligand>
        <name>Ni(2+)</name>
        <dbReference type="ChEBI" id="CHEBI:49786"/>
        <label>1</label>
    </ligand>
</feature>
<feature type="binding site" description="via carbamate group" evidence="1">
    <location>
        <position position="214"/>
    </location>
    <ligand>
        <name>Ni(2+)</name>
        <dbReference type="ChEBI" id="CHEBI:49786"/>
        <label>1</label>
    </ligand>
</feature>
<feature type="binding site" description="via carbamate group" evidence="1">
    <location>
        <position position="214"/>
    </location>
    <ligand>
        <name>Ni(2+)</name>
        <dbReference type="ChEBI" id="CHEBI:49786"/>
        <label>2</label>
    </ligand>
</feature>
<feature type="binding site" evidence="1">
    <location>
        <position position="216"/>
    </location>
    <ligand>
        <name>substrate</name>
    </ligand>
</feature>
<feature type="binding site" evidence="1">
    <location>
        <position position="243"/>
    </location>
    <ligand>
        <name>Ni(2+)</name>
        <dbReference type="ChEBI" id="CHEBI:49786"/>
        <label>2</label>
    </ligand>
</feature>
<feature type="binding site" evidence="1">
    <location>
        <position position="269"/>
    </location>
    <ligand>
        <name>Ni(2+)</name>
        <dbReference type="ChEBI" id="CHEBI:49786"/>
        <label>2</label>
    </ligand>
</feature>
<feature type="binding site" evidence="1">
    <location>
        <position position="357"/>
    </location>
    <ligand>
        <name>Ni(2+)</name>
        <dbReference type="ChEBI" id="CHEBI:49786"/>
        <label>1</label>
    </ligand>
</feature>
<feature type="modified residue" description="N6-carboxylysine" evidence="1">
    <location>
        <position position="214"/>
    </location>
</feature>
<dbReference type="EC" id="3.5.1.5" evidence="1"/>
<dbReference type="EMBL" id="CP000086">
    <property type="protein sequence ID" value="ABC38057.1"/>
    <property type="molecule type" value="Genomic_DNA"/>
</dbReference>
<dbReference type="SMR" id="Q2SYF7"/>
<dbReference type="KEGG" id="bte:BTH_I1496"/>
<dbReference type="HOGENOM" id="CLU_000980_0_0_4"/>
<dbReference type="UniPathway" id="UPA00258">
    <property type="reaction ID" value="UER00370"/>
</dbReference>
<dbReference type="Proteomes" id="UP000001930">
    <property type="component" value="Chromosome I"/>
</dbReference>
<dbReference type="GO" id="GO:0005737">
    <property type="term" value="C:cytoplasm"/>
    <property type="evidence" value="ECO:0007669"/>
    <property type="project" value="UniProtKB-SubCell"/>
</dbReference>
<dbReference type="GO" id="GO:0016151">
    <property type="term" value="F:nickel cation binding"/>
    <property type="evidence" value="ECO:0007669"/>
    <property type="project" value="UniProtKB-UniRule"/>
</dbReference>
<dbReference type="GO" id="GO:0009039">
    <property type="term" value="F:urease activity"/>
    <property type="evidence" value="ECO:0007669"/>
    <property type="project" value="UniProtKB-UniRule"/>
</dbReference>
<dbReference type="GO" id="GO:0043419">
    <property type="term" value="P:urea catabolic process"/>
    <property type="evidence" value="ECO:0007669"/>
    <property type="project" value="UniProtKB-UniRule"/>
</dbReference>
<dbReference type="CDD" id="cd00375">
    <property type="entry name" value="Urease_alpha"/>
    <property type="match status" value="1"/>
</dbReference>
<dbReference type="Gene3D" id="3.20.20.140">
    <property type="entry name" value="Metal-dependent hydrolases"/>
    <property type="match status" value="1"/>
</dbReference>
<dbReference type="Gene3D" id="2.30.40.10">
    <property type="entry name" value="Urease, subunit C, domain 1"/>
    <property type="match status" value="1"/>
</dbReference>
<dbReference type="HAMAP" id="MF_01953">
    <property type="entry name" value="Urease_alpha"/>
    <property type="match status" value="1"/>
</dbReference>
<dbReference type="InterPro" id="IPR006680">
    <property type="entry name" value="Amidohydro-rel"/>
</dbReference>
<dbReference type="InterPro" id="IPR011059">
    <property type="entry name" value="Metal-dep_hydrolase_composite"/>
</dbReference>
<dbReference type="InterPro" id="IPR032466">
    <property type="entry name" value="Metal_Hydrolase"/>
</dbReference>
<dbReference type="InterPro" id="IPR011612">
    <property type="entry name" value="Urease_alpha_N_dom"/>
</dbReference>
<dbReference type="InterPro" id="IPR050112">
    <property type="entry name" value="Urease_alpha_subunit"/>
</dbReference>
<dbReference type="InterPro" id="IPR017950">
    <property type="entry name" value="Urease_AS"/>
</dbReference>
<dbReference type="InterPro" id="IPR005848">
    <property type="entry name" value="Urease_asu"/>
</dbReference>
<dbReference type="InterPro" id="IPR017951">
    <property type="entry name" value="Urease_asu_c"/>
</dbReference>
<dbReference type="InterPro" id="IPR029754">
    <property type="entry name" value="Urease_Ni-bd"/>
</dbReference>
<dbReference type="NCBIfam" id="NF009685">
    <property type="entry name" value="PRK13206.1"/>
    <property type="match status" value="1"/>
</dbReference>
<dbReference type="NCBIfam" id="NF009686">
    <property type="entry name" value="PRK13207.1"/>
    <property type="match status" value="1"/>
</dbReference>
<dbReference type="NCBIfam" id="TIGR01792">
    <property type="entry name" value="urease_alph"/>
    <property type="match status" value="1"/>
</dbReference>
<dbReference type="PANTHER" id="PTHR43440">
    <property type="entry name" value="UREASE"/>
    <property type="match status" value="1"/>
</dbReference>
<dbReference type="PANTHER" id="PTHR43440:SF1">
    <property type="entry name" value="UREASE"/>
    <property type="match status" value="1"/>
</dbReference>
<dbReference type="Pfam" id="PF01979">
    <property type="entry name" value="Amidohydro_1"/>
    <property type="match status" value="1"/>
</dbReference>
<dbReference type="Pfam" id="PF00449">
    <property type="entry name" value="Urease_alpha"/>
    <property type="match status" value="1"/>
</dbReference>
<dbReference type="PRINTS" id="PR01752">
    <property type="entry name" value="UREASE"/>
</dbReference>
<dbReference type="SUPFAM" id="SSF51338">
    <property type="entry name" value="Composite domain of metallo-dependent hydrolases"/>
    <property type="match status" value="2"/>
</dbReference>
<dbReference type="SUPFAM" id="SSF51556">
    <property type="entry name" value="Metallo-dependent hydrolases"/>
    <property type="match status" value="1"/>
</dbReference>
<dbReference type="PROSITE" id="PS01120">
    <property type="entry name" value="UREASE_1"/>
    <property type="match status" value="1"/>
</dbReference>
<dbReference type="PROSITE" id="PS00145">
    <property type="entry name" value="UREASE_2"/>
    <property type="match status" value="1"/>
</dbReference>
<dbReference type="PROSITE" id="PS51368">
    <property type="entry name" value="UREASE_3"/>
    <property type="match status" value="1"/>
</dbReference>
<reference key="1">
    <citation type="journal article" date="2005" name="BMC Genomics">
        <title>Bacterial genome adaptation to niches: divergence of the potential virulence genes in three Burkholderia species of different survival strategies.</title>
        <authorList>
            <person name="Kim H.S."/>
            <person name="Schell M.A."/>
            <person name="Yu Y."/>
            <person name="Ulrich R.L."/>
            <person name="Sarria S.H."/>
            <person name="Nierman W.C."/>
            <person name="DeShazer D."/>
        </authorList>
    </citation>
    <scope>NUCLEOTIDE SEQUENCE [LARGE SCALE GENOMIC DNA]</scope>
    <source>
        <strain>ATCC 700388 / DSM 13276 / CCUG 48851 / CIP 106301 / E264</strain>
    </source>
</reference>
<protein>
    <recommendedName>
        <fullName evidence="1">Urease subunit alpha</fullName>
        <ecNumber evidence="1">3.5.1.5</ecNumber>
    </recommendedName>
    <alternativeName>
        <fullName evidence="1">Urea amidohydrolase subunit alpha</fullName>
    </alternativeName>
</protein>